<protein>
    <recommendedName>
        <fullName evidence="1">Iron-sulfur cluster insertion protein ErpA</fullName>
    </recommendedName>
</protein>
<proteinExistence type="inferred from homology"/>
<keyword id="KW-0408">Iron</keyword>
<keyword id="KW-0411">Iron-sulfur</keyword>
<keyword id="KW-0479">Metal-binding</keyword>
<sequence length="114" mass="12269">MSNETVLPLQFTEAAAKKVKLLISDEENPNLKLRVYITGGGCSGFQYGFTFDDQVNDGDMTIEKQGVELVVDPMSLQYLVGGAVDYTEGLEGSRFIVTNPNAKSTCGCGSSFSI</sequence>
<accession>Q66EE9</accession>
<dbReference type="EMBL" id="BX936398">
    <property type="protein sequence ID" value="CAH19984.1"/>
    <property type="molecule type" value="Genomic_DNA"/>
</dbReference>
<dbReference type="RefSeq" id="WP_002209365.1">
    <property type="nucleotide sequence ID" value="NZ_CP009712.1"/>
</dbReference>
<dbReference type="SMR" id="Q66EE9"/>
<dbReference type="GeneID" id="96664241"/>
<dbReference type="KEGG" id="ypo:BZ17_1811"/>
<dbReference type="KEGG" id="yps:YPTB0744"/>
<dbReference type="PATRIC" id="fig|273123.14.peg.1919"/>
<dbReference type="Proteomes" id="UP000001011">
    <property type="component" value="Chromosome"/>
</dbReference>
<dbReference type="GO" id="GO:0005829">
    <property type="term" value="C:cytosol"/>
    <property type="evidence" value="ECO:0007669"/>
    <property type="project" value="TreeGrafter"/>
</dbReference>
<dbReference type="GO" id="GO:0051537">
    <property type="term" value="F:2 iron, 2 sulfur cluster binding"/>
    <property type="evidence" value="ECO:0007669"/>
    <property type="project" value="UniProtKB-ARBA"/>
</dbReference>
<dbReference type="GO" id="GO:0051539">
    <property type="term" value="F:4 iron, 4 sulfur cluster binding"/>
    <property type="evidence" value="ECO:0007669"/>
    <property type="project" value="TreeGrafter"/>
</dbReference>
<dbReference type="GO" id="GO:0005506">
    <property type="term" value="F:iron ion binding"/>
    <property type="evidence" value="ECO:0007669"/>
    <property type="project" value="UniProtKB-UniRule"/>
</dbReference>
<dbReference type="GO" id="GO:0016226">
    <property type="term" value="P:iron-sulfur cluster assembly"/>
    <property type="evidence" value="ECO:0007669"/>
    <property type="project" value="UniProtKB-UniRule"/>
</dbReference>
<dbReference type="FunFam" id="2.60.300.12:FF:000002">
    <property type="entry name" value="Iron-sulfur cluster insertion protein ErpA"/>
    <property type="match status" value="1"/>
</dbReference>
<dbReference type="Gene3D" id="2.60.300.12">
    <property type="entry name" value="HesB-like domain"/>
    <property type="match status" value="1"/>
</dbReference>
<dbReference type="HAMAP" id="MF_01380">
    <property type="entry name" value="Fe_S_insert_ErpA"/>
    <property type="match status" value="1"/>
</dbReference>
<dbReference type="InterPro" id="IPR000361">
    <property type="entry name" value="FeS_biogenesis"/>
</dbReference>
<dbReference type="InterPro" id="IPR016092">
    <property type="entry name" value="FeS_cluster_insertion"/>
</dbReference>
<dbReference type="InterPro" id="IPR017870">
    <property type="entry name" value="FeS_cluster_insertion_CS"/>
</dbReference>
<dbReference type="InterPro" id="IPR023063">
    <property type="entry name" value="FeS_cluster_insertion_RrpA"/>
</dbReference>
<dbReference type="InterPro" id="IPR035903">
    <property type="entry name" value="HesB-like_dom_sf"/>
</dbReference>
<dbReference type="NCBIfam" id="TIGR00049">
    <property type="entry name" value="iron-sulfur cluster assembly accessory protein"/>
    <property type="match status" value="1"/>
</dbReference>
<dbReference type="NCBIfam" id="NF010147">
    <property type="entry name" value="PRK13623.1"/>
    <property type="match status" value="1"/>
</dbReference>
<dbReference type="PANTHER" id="PTHR43011">
    <property type="entry name" value="IRON-SULFUR CLUSTER ASSEMBLY 2 HOMOLOG, MITOCHONDRIAL"/>
    <property type="match status" value="1"/>
</dbReference>
<dbReference type="PANTHER" id="PTHR43011:SF1">
    <property type="entry name" value="IRON-SULFUR CLUSTER ASSEMBLY 2 HOMOLOG, MITOCHONDRIAL"/>
    <property type="match status" value="1"/>
</dbReference>
<dbReference type="Pfam" id="PF01521">
    <property type="entry name" value="Fe-S_biosyn"/>
    <property type="match status" value="1"/>
</dbReference>
<dbReference type="SUPFAM" id="SSF89360">
    <property type="entry name" value="HesB-like domain"/>
    <property type="match status" value="1"/>
</dbReference>
<dbReference type="PROSITE" id="PS01152">
    <property type="entry name" value="HESB"/>
    <property type="match status" value="1"/>
</dbReference>
<reference key="1">
    <citation type="journal article" date="2004" name="Proc. Natl. Acad. Sci. U.S.A.">
        <title>Insights into the evolution of Yersinia pestis through whole-genome comparison with Yersinia pseudotuberculosis.</title>
        <authorList>
            <person name="Chain P.S.G."/>
            <person name="Carniel E."/>
            <person name="Larimer F.W."/>
            <person name="Lamerdin J."/>
            <person name="Stoutland P.O."/>
            <person name="Regala W.M."/>
            <person name="Georgescu A.M."/>
            <person name="Vergez L.M."/>
            <person name="Land M.L."/>
            <person name="Motin V.L."/>
            <person name="Brubaker R.R."/>
            <person name="Fowler J."/>
            <person name="Hinnebusch J."/>
            <person name="Marceau M."/>
            <person name="Medigue C."/>
            <person name="Simonet M."/>
            <person name="Chenal-Francisque V."/>
            <person name="Souza B."/>
            <person name="Dacheux D."/>
            <person name="Elliott J.M."/>
            <person name="Derbise A."/>
            <person name="Hauser L.J."/>
            <person name="Garcia E."/>
        </authorList>
    </citation>
    <scope>NUCLEOTIDE SEQUENCE [LARGE SCALE GENOMIC DNA]</scope>
    <source>
        <strain>IP32953</strain>
    </source>
</reference>
<comment type="function">
    <text evidence="1">Required for insertion of 4Fe-4S clusters for at least IspG.</text>
</comment>
<comment type="cofactor">
    <cofactor evidence="1">
        <name>iron-sulfur cluster</name>
        <dbReference type="ChEBI" id="CHEBI:30408"/>
    </cofactor>
    <text evidence="1">Binds 1 iron-sulfur cluster per subunit.</text>
</comment>
<comment type="subunit">
    <text evidence="1">Homodimer.</text>
</comment>
<comment type="similarity">
    <text evidence="1">Belongs to the HesB/IscA family.</text>
</comment>
<gene>
    <name evidence="1" type="primary">erpA</name>
    <name type="ordered locus">YPTB0744</name>
</gene>
<name>ERPA_YERPS</name>
<evidence type="ECO:0000255" key="1">
    <source>
        <dbReference type="HAMAP-Rule" id="MF_01380"/>
    </source>
</evidence>
<feature type="chain" id="PRO_0000311586" description="Iron-sulfur cluster insertion protein ErpA">
    <location>
        <begin position="1"/>
        <end position="114"/>
    </location>
</feature>
<feature type="binding site" evidence="1">
    <location>
        <position position="42"/>
    </location>
    <ligand>
        <name>iron-sulfur cluster</name>
        <dbReference type="ChEBI" id="CHEBI:30408"/>
    </ligand>
</feature>
<feature type="binding site" evidence="1">
    <location>
        <position position="106"/>
    </location>
    <ligand>
        <name>iron-sulfur cluster</name>
        <dbReference type="ChEBI" id="CHEBI:30408"/>
    </ligand>
</feature>
<feature type="binding site" evidence="1">
    <location>
        <position position="108"/>
    </location>
    <ligand>
        <name>iron-sulfur cluster</name>
        <dbReference type="ChEBI" id="CHEBI:30408"/>
    </ligand>
</feature>
<organism>
    <name type="scientific">Yersinia pseudotuberculosis serotype I (strain IP32953)</name>
    <dbReference type="NCBI Taxonomy" id="273123"/>
    <lineage>
        <taxon>Bacteria</taxon>
        <taxon>Pseudomonadati</taxon>
        <taxon>Pseudomonadota</taxon>
        <taxon>Gammaproteobacteria</taxon>
        <taxon>Enterobacterales</taxon>
        <taxon>Yersiniaceae</taxon>
        <taxon>Yersinia</taxon>
    </lineage>
</organism>